<gene>
    <name type="primary">Rab44</name>
</gene>
<feature type="chain" id="PRO_0000333078" description="Ras-related protein Rab-44">
    <location>
        <begin position="1"/>
        <end position="973"/>
    </location>
</feature>
<feature type="domain" description="EF-hand" evidence="3">
    <location>
        <begin position="77"/>
        <end position="111"/>
    </location>
</feature>
<feature type="region of interest" description="Disordered" evidence="4">
    <location>
        <begin position="1"/>
        <end position="42"/>
    </location>
</feature>
<feature type="region of interest" description="Disordered" evidence="4">
    <location>
        <begin position="112"/>
        <end position="140"/>
    </location>
</feature>
<feature type="region of interest" description="Disordered" evidence="4">
    <location>
        <begin position="319"/>
        <end position="368"/>
    </location>
</feature>
<feature type="region of interest" description="Disordered" evidence="4">
    <location>
        <begin position="421"/>
        <end position="481"/>
    </location>
</feature>
<feature type="region of interest" description="Disordered" evidence="4">
    <location>
        <begin position="493"/>
        <end position="708"/>
    </location>
</feature>
<feature type="region of interest" description="Disordered" evidence="4">
    <location>
        <begin position="724"/>
        <end position="779"/>
    </location>
</feature>
<feature type="coiled-coil region" evidence="2">
    <location>
        <begin position="219"/>
        <end position="310"/>
    </location>
</feature>
<feature type="compositionally biased region" description="Basic residues" evidence="4">
    <location>
        <begin position="1"/>
        <end position="21"/>
    </location>
</feature>
<feature type="compositionally biased region" description="Polar residues" evidence="4">
    <location>
        <begin position="123"/>
        <end position="135"/>
    </location>
</feature>
<feature type="compositionally biased region" description="Pro residues" evidence="4">
    <location>
        <begin position="428"/>
        <end position="440"/>
    </location>
</feature>
<feature type="compositionally biased region" description="Basic and acidic residues" evidence="4">
    <location>
        <begin position="445"/>
        <end position="457"/>
    </location>
</feature>
<feature type="compositionally biased region" description="Low complexity" evidence="4">
    <location>
        <begin position="513"/>
        <end position="524"/>
    </location>
</feature>
<feature type="compositionally biased region" description="Basic and acidic residues" evidence="4">
    <location>
        <begin position="548"/>
        <end position="559"/>
    </location>
</feature>
<feature type="compositionally biased region" description="Basic and acidic residues" evidence="4">
    <location>
        <begin position="598"/>
        <end position="608"/>
    </location>
</feature>
<feature type="compositionally biased region" description="Basic and acidic residues" evidence="4">
    <location>
        <begin position="654"/>
        <end position="663"/>
    </location>
</feature>
<feature type="compositionally biased region" description="Polar residues" evidence="4">
    <location>
        <begin position="665"/>
        <end position="680"/>
    </location>
</feature>
<feature type="compositionally biased region" description="Basic and acidic residues" evidence="4">
    <location>
        <begin position="750"/>
        <end position="766"/>
    </location>
</feature>
<feature type="binding site" evidence="1">
    <location>
        <begin position="792"/>
        <end position="799"/>
    </location>
    <ligand>
        <name>GTP</name>
        <dbReference type="ChEBI" id="CHEBI:37565"/>
    </ligand>
</feature>
<feature type="binding site" evidence="1">
    <location>
        <begin position="840"/>
        <end position="844"/>
    </location>
    <ligand>
        <name>GTP</name>
        <dbReference type="ChEBI" id="CHEBI:37565"/>
    </ligand>
</feature>
<feature type="binding site" evidence="1">
    <location>
        <begin position="898"/>
        <end position="901"/>
    </location>
    <ligand>
        <name>GTP</name>
        <dbReference type="ChEBI" id="CHEBI:37565"/>
    </ligand>
</feature>
<feature type="lipid moiety-binding region" description="S-geranylgeranyl cysteine" evidence="1">
    <location>
        <position position="971"/>
    </location>
</feature>
<feature type="lipid moiety-binding region" description="S-geranylgeranyl cysteine" evidence="1">
    <location>
        <position position="972"/>
    </location>
</feature>
<keyword id="KW-1003">Cell membrane</keyword>
<keyword id="KW-0175">Coiled coil</keyword>
<keyword id="KW-0342">GTP-binding</keyword>
<keyword id="KW-0449">Lipoprotein</keyword>
<keyword id="KW-0472">Membrane</keyword>
<keyword id="KW-0547">Nucleotide-binding</keyword>
<keyword id="KW-0636">Prenylation</keyword>
<keyword id="KW-1185">Reference proteome</keyword>
<accession>Q8CB87</accession>
<accession>B9EID0</accession>
<comment type="subcellular location">
    <subcellularLocation>
        <location evidence="5">Cell membrane</location>
        <topology evidence="5">Lipid-anchor</topology>
        <orientation evidence="5">Cytoplasmic side</orientation>
    </subcellularLocation>
</comment>
<comment type="similarity">
    <text evidence="5">Belongs to the small GTPase superfamily. Rab family.</text>
</comment>
<comment type="sequence caution" evidence="5">
    <conflict type="erroneous initiation">
        <sequence resource="EMBL-CDS" id="AAI39373"/>
    </conflict>
    <text>Truncated N-terminus.</text>
</comment>
<comment type="sequence caution" evidence="5">
    <conflict type="erroneous initiation">
        <sequence resource="EMBL-CDS" id="BAC29479"/>
    </conflict>
    <text>Truncated N-terminus.</text>
</comment>
<sequence length="973" mass="106328">MEKGKGVSRKGRKLASSRRRQAREPADGQDAPVAAEAESWPSDADAELQGFFQDCGAKERGFVTREDLAEARFSFLGGEEPQMIFDWVDVESRGHLSLEEFSSGLKNVFGSSPGTHRLRTKRSLPSQRESVTSTLPVPEEADAEEKEAFLALIGQMETGHSLSEQAEIWKLWRELRQEEPQLAGNLEGFLAKMSSRLQEAQADREALAWTLRKRDSDHLYKVRQLYEETEEQIRREKQQLQAQSDSRGMALSAHMQEALEAKEQEVQRLAEGQRELEAQLLHLSSTQQEANRENLQLREAERDLAGQLEEVRGQLQVTRGHLDTARTRGKVSWQIEEEPSVPRANKEAPDPQAVPTEEAPLPELFGNNDNWDQFLSSIEAHSHRTLRLCWSPPPSPSSTSAPQTPRIVRQISISKISALQFSQEPASDPDPGPRGSPEVPPGGAKDGKGVEDPKGQDEQDVSSKQPVDSPDSDARPKGSFLWSLPGALTAESGTVEAAFRDQLAFEAEPPPQGLSSSPQSPAGSRKQTQTPDLGDKSLWSGPDPAKQSLEREVMAEDLKLGLGSQGATALPEGATEPSLSLESVDQVGPERPVQDATHLARQESHAKGFQEAPGQVLSLDSLPTHLPQSLEEQLRPEEGNLGERGQQDPGSEASESHGLEARSMESPQQDDPLPNTSQPPAETEVPAPGQMSPPRGSPILGAGAGLAVGTPETTHTLLTLAESEAQPGPVSMPVQVESKSGAPQPTEPEAESRPEDPRTDLQEAERSSSPGDLTAGKPQADPDYLYHVVFLGDSNVGKTSFLHLLHHDAFATGLTATVGVDFRVKNLLVDNKTFALQLWDTAGQERYHSLTRQLLRKAEGVVLMYDVTSQESFTHVRYWLDCLQDAGVEGVAMVLLGNKMDCEEERQVPTEAGRRLAQELGVSFGECSAALGHNILEPMMNLARSLKMQEDRLKASLAEVTHPQSTKRAGCCH</sequence>
<proteinExistence type="evidence at protein level"/>
<protein>
    <recommendedName>
        <fullName>Ras-related protein Rab-44</fullName>
    </recommendedName>
</protein>
<evidence type="ECO:0000250" key="1"/>
<evidence type="ECO:0000255" key="2"/>
<evidence type="ECO:0000255" key="3">
    <source>
        <dbReference type="PROSITE-ProRule" id="PRU00448"/>
    </source>
</evidence>
<evidence type="ECO:0000256" key="4">
    <source>
        <dbReference type="SAM" id="MobiDB-lite"/>
    </source>
</evidence>
<evidence type="ECO:0000305" key="5"/>
<reference key="1">
    <citation type="journal article" date="2009" name="PLoS Biol.">
        <title>Lineage-specific biology revealed by a finished genome assembly of the mouse.</title>
        <authorList>
            <person name="Church D.M."/>
            <person name="Goodstadt L."/>
            <person name="Hillier L.W."/>
            <person name="Zody M.C."/>
            <person name="Goldstein S."/>
            <person name="She X."/>
            <person name="Bult C.J."/>
            <person name="Agarwala R."/>
            <person name="Cherry J.L."/>
            <person name="DiCuccio M."/>
            <person name="Hlavina W."/>
            <person name="Kapustin Y."/>
            <person name="Meric P."/>
            <person name="Maglott D."/>
            <person name="Birtle Z."/>
            <person name="Marques A.C."/>
            <person name="Graves T."/>
            <person name="Zhou S."/>
            <person name="Teague B."/>
            <person name="Potamousis K."/>
            <person name="Churas C."/>
            <person name="Place M."/>
            <person name="Herschleb J."/>
            <person name="Runnheim R."/>
            <person name="Forrest D."/>
            <person name="Amos-Landgraf J."/>
            <person name="Schwartz D.C."/>
            <person name="Cheng Z."/>
            <person name="Lindblad-Toh K."/>
            <person name="Eichler E.E."/>
            <person name="Ponting C.P."/>
        </authorList>
    </citation>
    <scope>NUCLEOTIDE SEQUENCE [LARGE SCALE GENOMIC DNA]</scope>
    <source>
        <strain>C57BL/6J</strain>
    </source>
</reference>
<reference key="2">
    <citation type="journal article" date="2005" name="Science">
        <title>The transcriptional landscape of the mammalian genome.</title>
        <authorList>
            <person name="Carninci P."/>
            <person name="Kasukawa T."/>
            <person name="Katayama S."/>
            <person name="Gough J."/>
            <person name="Frith M.C."/>
            <person name="Maeda N."/>
            <person name="Oyama R."/>
            <person name="Ravasi T."/>
            <person name="Lenhard B."/>
            <person name="Wells C."/>
            <person name="Kodzius R."/>
            <person name="Shimokawa K."/>
            <person name="Bajic V.B."/>
            <person name="Brenner S.E."/>
            <person name="Batalov S."/>
            <person name="Forrest A.R."/>
            <person name="Zavolan M."/>
            <person name="Davis M.J."/>
            <person name="Wilming L.G."/>
            <person name="Aidinis V."/>
            <person name="Allen J.E."/>
            <person name="Ambesi-Impiombato A."/>
            <person name="Apweiler R."/>
            <person name="Aturaliya R.N."/>
            <person name="Bailey T.L."/>
            <person name="Bansal M."/>
            <person name="Baxter L."/>
            <person name="Beisel K.W."/>
            <person name="Bersano T."/>
            <person name="Bono H."/>
            <person name="Chalk A.M."/>
            <person name="Chiu K.P."/>
            <person name="Choudhary V."/>
            <person name="Christoffels A."/>
            <person name="Clutterbuck D.R."/>
            <person name="Crowe M.L."/>
            <person name="Dalla E."/>
            <person name="Dalrymple B.P."/>
            <person name="de Bono B."/>
            <person name="Della Gatta G."/>
            <person name="di Bernardo D."/>
            <person name="Down T."/>
            <person name="Engstrom P."/>
            <person name="Fagiolini M."/>
            <person name="Faulkner G."/>
            <person name="Fletcher C.F."/>
            <person name="Fukushima T."/>
            <person name="Furuno M."/>
            <person name="Futaki S."/>
            <person name="Gariboldi M."/>
            <person name="Georgii-Hemming P."/>
            <person name="Gingeras T.R."/>
            <person name="Gojobori T."/>
            <person name="Green R.E."/>
            <person name="Gustincich S."/>
            <person name="Harbers M."/>
            <person name="Hayashi Y."/>
            <person name="Hensch T.K."/>
            <person name="Hirokawa N."/>
            <person name="Hill D."/>
            <person name="Huminiecki L."/>
            <person name="Iacono M."/>
            <person name="Ikeo K."/>
            <person name="Iwama A."/>
            <person name="Ishikawa T."/>
            <person name="Jakt M."/>
            <person name="Kanapin A."/>
            <person name="Katoh M."/>
            <person name="Kawasawa Y."/>
            <person name="Kelso J."/>
            <person name="Kitamura H."/>
            <person name="Kitano H."/>
            <person name="Kollias G."/>
            <person name="Krishnan S.P."/>
            <person name="Kruger A."/>
            <person name="Kummerfeld S.K."/>
            <person name="Kurochkin I.V."/>
            <person name="Lareau L.F."/>
            <person name="Lazarevic D."/>
            <person name="Lipovich L."/>
            <person name="Liu J."/>
            <person name="Liuni S."/>
            <person name="McWilliam S."/>
            <person name="Madan Babu M."/>
            <person name="Madera M."/>
            <person name="Marchionni L."/>
            <person name="Matsuda H."/>
            <person name="Matsuzawa S."/>
            <person name="Miki H."/>
            <person name="Mignone F."/>
            <person name="Miyake S."/>
            <person name="Morris K."/>
            <person name="Mottagui-Tabar S."/>
            <person name="Mulder N."/>
            <person name="Nakano N."/>
            <person name="Nakauchi H."/>
            <person name="Ng P."/>
            <person name="Nilsson R."/>
            <person name="Nishiguchi S."/>
            <person name="Nishikawa S."/>
            <person name="Nori F."/>
            <person name="Ohara O."/>
            <person name="Okazaki Y."/>
            <person name="Orlando V."/>
            <person name="Pang K.C."/>
            <person name="Pavan W.J."/>
            <person name="Pavesi G."/>
            <person name="Pesole G."/>
            <person name="Petrovsky N."/>
            <person name="Piazza S."/>
            <person name="Reed J."/>
            <person name="Reid J.F."/>
            <person name="Ring B.Z."/>
            <person name="Ringwald M."/>
            <person name="Rost B."/>
            <person name="Ruan Y."/>
            <person name="Salzberg S.L."/>
            <person name="Sandelin A."/>
            <person name="Schneider C."/>
            <person name="Schoenbach C."/>
            <person name="Sekiguchi K."/>
            <person name="Semple C.A."/>
            <person name="Seno S."/>
            <person name="Sessa L."/>
            <person name="Sheng Y."/>
            <person name="Shibata Y."/>
            <person name="Shimada H."/>
            <person name="Shimada K."/>
            <person name="Silva D."/>
            <person name="Sinclair B."/>
            <person name="Sperling S."/>
            <person name="Stupka E."/>
            <person name="Sugiura K."/>
            <person name="Sultana R."/>
            <person name="Takenaka Y."/>
            <person name="Taki K."/>
            <person name="Tammoja K."/>
            <person name="Tan S.L."/>
            <person name="Tang S."/>
            <person name="Taylor M.S."/>
            <person name="Tegner J."/>
            <person name="Teichmann S.A."/>
            <person name="Ueda H.R."/>
            <person name="van Nimwegen E."/>
            <person name="Verardo R."/>
            <person name="Wei C.L."/>
            <person name="Yagi K."/>
            <person name="Yamanishi H."/>
            <person name="Zabarovsky E."/>
            <person name="Zhu S."/>
            <person name="Zimmer A."/>
            <person name="Hide W."/>
            <person name="Bult C."/>
            <person name="Grimmond S.M."/>
            <person name="Teasdale R.D."/>
            <person name="Liu E.T."/>
            <person name="Brusic V."/>
            <person name="Quackenbush J."/>
            <person name="Wahlestedt C."/>
            <person name="Mattick J.S."/>
            <person name="Hume D.A."/>
            <person name="Kai C."/>
            <person name="Sasaki D."/>
            <person name="Tomaru Y."/>
            <person name="Fukuda S."/>
            <person name="Kanamori-Katayama M."/>
            <person name="Suzuki M."/>
            <person name="Aoki J."/>
            <person name="Arakawa T."/>
            <person name="Iida J."/>
            <person name="Imamura K."/>
            <person name="Itoh M."/>
            <person name="Kato T."/>
            <person name="Kawaji H."/>
            <person name="Kawagashira N."/>
            <person name="Kawashima T."/>
            <person name="Kojima M."/>
            <person name="Kondo S."/>
            <person name="Konno H."/>
            <person name="Nakano K."/>
            <person name="Ninomiya N."/>
            <person name="Nishio T."/>
            <person name="Okada M."/>
            <person name="Plessy C."/>
            <person name="Shibata K."/>
            <person name="Shiraki T."/>
            <person name="Suzuki S."/>
            <person name="Tagami M."/>
            <person name="Waki K."/>
            <person name="Watahiki A."/>
            <person name="Okamura-Oho Y."/>
            <person name="Suzuki H."/>
            <person name="Kawai J."/>
            <person name="Hayashizaki Y."/>
        </authorList>
    </citation>
    <scope>NUCLEOTIDE SEQUENCE [LARGE SCALE MRNA] OF 243-973</scope>
    <source>
        <strain>C57BL/6J</strain>
        <tissue>Bone</tissue>
    </source>
</reference>
<reference key="3">
    <citation type="journal article" date="2004" name="Genome Res.">
        <title>The status, quality, and expansion of the NIH full-length cDNA project: the Mammalian Gene Collection (MGC).</title>
        <authorList>
            <consortium name="The MGC Project Team"/>
        </authorList>
    </citation>
    <scope>NUCLEOTIDE SEQUENCE [LARGE SCALE MRNA] OF 243-973</scope>
    <source>
        <tissue>Brain</tissue>
    </source>
</reference>
<reference key="4">
    <citation type="journal article" date="2010" name="Cell">
        <title>A tissue-specific atlas of mouse protein phosphorylation and expression.</title>
        <authorList>
            <person name="Huttlin E.L."/>
            <person name="Jedrychowski M.P."/>
            <person name="Elias J.E."/>
            <person name="Goswami T."/>
            <person name="Rad R."/>
            <person name="Beausoleil S.A."/>
            <person name="Villen J."/>
            <person name="Haas W."/>
            <person name="Sowa M.E."/>
            <person name="Gygi S.P."/>
        </authorList>
    </citation>
    <scope>IDENTIFICATION BY MASS SPECTROMETRY [LARGE SCALE ANALYSIS]</scope>
    <source>
        <tissue>Spleen</tissue>
    </source>
</reference>
<name>RAB44_MOUSE</name>
<dbReference type="EMBL" id="GL456179">
    <property type="status" value="NOT_ANNOTATED_CDS"/>
    <property type="molecule type" value="Genomic_DNA"/>
</dbReference>
<dbReference type="EMBL" id="AK036563">
    <property type="protein sequence ID" value="BAC29479.1"/>
    <property type="status" value="ALT_INIT"/>
    <property type="molecule type" value="mRNA"/>
</dbReference>
<dbReference type="EMBL" id="BC139372">
    <property type="protein sequence ID" value="AAI39373.1"/>
    <property type="status" value="ALT_INIT"/>
    <property type="molecule type" value="mRNA"/>
</dbReference>
<dbReference type="CCDS" id="CCDS37535.2"/>
<dbReference type="RefSeq" id="NP_001002786.1">
    <property type="nucleotide sequence ID" value="NM_001002786.2"/>
</dbReference>
<dbReference type="RefSeq" id="NP_001351777.1">
    <property type="nucleotide sequence ID" value="NM_001364848.1"/>
</dbReference>
<dbReference type="RefSeq" id="XP_006524654.1">
    <property type="nucleotide sequence ID" value="XM_006524591.2"/>
</dbReference>
<dbReference type="RefSeq" id="XP_006524660.1">
    <property type="nucleotide sequence ID" value="XM_006524597.3"/>
</dbReference>
<dbReference type="RefSeq" id="XP_011244831.1">
    <property type="nucleotide sequence ID" value="XM_011246529.2"/>
</dbReference>
<dbReference type="SMR" id="Q8CB87"/>
<dbReference type="FunCoup" id="Q8CB87">
    <property type="interactions" value="151"/>
</dbReference>
<dbReference type="IntAct" id="Q8CB87">
    <property type="interactions" value="1"/>
</dbReference>
<dbReference type="STRING" id="10090.ENSMUSP00000085253"/>
<dbReference type="GlyGen" id="Q8CB87">
    <property type="glycosylation" value="1 site"/>
</dbReference>
<dbReference type="iPTMnet" id="Q8CB87"/>
<dbReference type="PhosphoSitePlus" id="Q8CB87"/>
<dbReference type="jPOST" id="Q8CB87"/>
<dbReference type="PaxDb" id="10090-ENSMUSP00000085253"/>
<dbReference type="PeptideAtlas" id="Q8CB87"/>
<dbReference type="ProteomicsDB" id="253148"/>
<dbReference type="ABCD" id="Q8CB87">
    <property type="antibodies" value="17 sequenced antibodies"/>
</dbReference>
<dbReference type="Antibodypedia" id="82285">
    <property type="antibodies" value="4 antibodies from 4 providers"/>
</dbReference>
<dbReference type="DNASU" id="442827"/>
<dbReference type="Ensembl" id="ENSMUST00000233717.2">
    <property type="protein sequence ID" value="ENSMUSP00000156400.2"/>
    <property type="gene ID" value="ENSMUSG00000064147.8"/>
</dbReference>
<dbReference type="GeneID" id="442827"/>
<dbReference type="UCSC" id="uc008bsi.1">
    <property type="organism name" value="mouse"/>
</dbReference>
<dbReference type="AGR" id="MGI:3045302"/>
<dbReference type="CTD" id="401258"/>
<dbReference type="MGI" id="MGI:3045302">
    <property type="gene designation" value="Rab44"/>
</dbReference>
<dbReference type="VEuPathDB" id="HostDB:ENSMUSG00000064147"/>
<dbReference type="eggNOG" id="KOG0078">
    <property type="taxonomic scope" value="Eukaryota"/>
</dbReference>
<dbReference type="GeneTree" id="ENSGT00940000160379"/>
<dbReference type="HOGENOM" id="CLU_012405_0_0_1"/>
<dbReference type="InParanoid" id="Q8CB87"/>
<dbReference type="OMA" id="SEMIFDW"/>
<dbReference type="OrthoDB" id="9396170at2759"/>
<dbReference type="PhylomeDB" id="Q8CB87"/>
<dbReference type="TreeFam" id="TF313199"/>
<dbReference type="Reactome" id="R-MMU-6798695">
    <property type="pathway name" value="Neutrophil degranulation"/>
</dbReference>
<dbReference type="Reactome" id="R-MMU-8873719">
    <property type="pathway name" value="RAB geranylgeranylation"/>
</dbReference>
<dbReference type="BioGRID-ORCS" id="442827">
    <property type="hits" value="2 hits in 76 CRISPR screens"/>
</dbReference>
<dbReference type="ChiTaRS" id="Rab44">
    <property type="organism name" value="mouse"/>
</dbReference>
<dbReference type="PRO" id="PR:Q8CB87"/>
<dbReference type="Proteomes" id="UP000000589">
    <property type="component" value="Chromosome 17"/>
</dbReference>
<dbReference type="RNAct" id="Q8CB87">
    <property type="molecule type" value="protein"/>
</dbReference>
<dbReference type="Bgee" id="ENSMUSG00000064147">
    <property type="expression patterns" value="Expressed in granulocyte and 37 other cell types or tissues"/>
</dbReference>
<dbReference type="ExpressionAtlas" id="Q8CB87">
    <property type="expression patterns" value="baseline and differential"/>
</dbReference>
<dbReference type="GO" id="GO:0005886">
    <property type="term" value="C:plasma membrane"/>
    <property type="evidence" value="ECO:0007669"/>
    <property type="project" value="UniProtKB-SubCell"/>
</dbReference>
<dbReference type="GO" id="GO:0005525">
    <property type="term" value="F:GTP binding"/>
    <property type="evidence" value="ECO:0007669"/>
    <property type="project" value="UniProtKB-KW"/>
</dbReference>
<dbReference type="GO" id="GO:0003924">
    <property type="term" value="F:GTPase activity"/>
    <property type="evidence" value="ECO:0007669"/>
    <property type="project" value="InterPro"/>
</dbReference>
<dbReference type="GO" id="GO:0002553">
    <property type="term" value="P:histamine secretion by mast cell"/>
    <property type="evidence" value="ECO:0000315"/>
    <property type="project" value="MGI"/>
</dbReference>
<dbReference type="GO" id="GO:0097279">
    <property type="term" value="P:histamine secretion mediated by IgE immunoglobulin"/>
    <property type="evidence" value="ECO:0000315"/>
    <property type="project" value="MGI"/>
</dbReference>
<dbReference type="GO" id="GO:0043303">
    <property type="term" value="P:mast cell degranulation"/>
    <property type="evidence" value="ECO:0000315"/>
    <property type="project" value="MGI"/>
</dbReference>
<dbReference type="CDD" id="cd00154">
    <property type="entry name" value="Rab"/>
    <property type="match status" value="1"/>
</dbReference>
<dbReference type="FunFam" id="3.40.50.300:FF:001129">
    <property type="entry name" value="ras-related protein Rab-44 isoform X2"/>
    <property type="match status" value="1"/>
</dbReference>
<dbReference type="Gene3D" id="3.40.50.300">
    <property type="entry name" value="P-loop containing nucleotide triphosphate hydrolases"/>
    <property type="match status" value="1"/>
</dbReference>
<dbReference type="InterPro" id="IPR011992">
    <property type="entry name" value="EF-hand-dom_pair"/>
</dbReference>
<dbReference type="InterPro" id="IPR027417">
    <property type="entry name" value="P-loop_NTPase"/>
</dbReference>
<dbReference type="InterPro" id="IPR050227">
    <property type="entry name" value="Rab"/>
</dbReference>
<dbReference type="InterPro" id="IPR005225">
    <property type="entry name" value="Small_GTP-bd"/>
</dbReference>
<dbReference type="InterPro" id="IPR001806">
    <property type="entry name" value="Small_GTPase"/>
</dbReference>
<dbReference type="NCBIfam" id="TIGR00231">
    <property type="entry name" value="small_GTP"/>
    <property type="match status" value="1"/>
</dbReference>
<dbReference type="PANTHER" id="PTHR47977">
    <property type="entry name" value="RAS-RELATED PROTEIN RAB"/>
    <property type="match status" value="1"/>
</dbReference>
<dbReference type="Pfam" id="PF00071">
    <property type="entry name" value="Ras"/>
    <property type="match status" value="1"/>
</dbReference>
<dbReference type="PRINTS" id="PR00449">
    <property type="entry name" value="RASTRNSFRMNG"/>
</dbReference>
<dbReference type="SMART" id="SM00175">
    <property type="entry name" value="RAB"/>
    <property type="match status" value="1"/>
</dbReference>
<dbReference type="SMART" id="SM00173">
    <property type="entry name" value="RAS"/>
    <property type="match status" value="1"/>
</dbReference>
<dbReference type="SMART" id="SM00174">
    <property type="entry name" value="RHO"/>
    <property type="match status" value="1"/>
</dbReference>
<dbReference type="SUPFAM" id="SSF47473">
    <property type="entry name" value="EF-hand"/>
    <property type="match status" value="1"/>
</dbReference>
<dbReference type="SUPFAM" id="SSF52540">
    <property type="entry name" value="P-loop containing nucleoside triphosphate hydrolases"/>
    <property type="match status" value="1"/>
</dbReference>
<dbReference type="PROSITE" id="PS51419">
    <property type="entry name" value="RAB"/>
    <property type="match status" value="1"/>
</dbReference>
<organism>
    <name type="scientific">Mus musculus</name>
    <name type="common">Mouse</name>
    <dbReference type="NCBI Taxonomy" id="10090"/>
    <lineage>
        <taxon>Eukaryota</taxon>
        <taxon>Metazoa</taxon>
        <taxon>Chordata</taxon>
        <taxon>Craniata</taxon>
        <taxon>Vertebrata</taxon>
        <taxon>Euteleostomi</taxon>
        <taxon>Mammalia</taxon>
        <taxon>Eutheria</taxon>
        <taxon>Euarchontoglires</taxon>
        <taxon>Glires</taxon>
        <taxon>Rodentia</taxon>
        <taxon>Myomorpha</taxon>
        <taxon>Muroidea</taxon>
        <taxon>Muridae</taxon>
        <taxon>Murinae</taxon>
        <taxon>Mus</taxon>
        <taxon>Mus</taxon>
    </lineage>
</organism>